<comment type="function">
    <text evidence="1">Endonuclease that specifically degrades the RNA of RNA-DNA hybrids.</text>
</comment>
<comment type="catalytic activity">
    <reaction evidence="1">
        <text>Endonucleolytic cleavage to 5'-phosphomonoester.</text>
        <dbReference type="EC" id="3.1.26.4"/>
    </reaction>
</comment>
<comment type="cofactor">
    <cofactor evidence="1">
        <name>Mg(2+)</name>
        <dbReference type="ChEBI" id="CHEBI:18420"/>
    </cofactor>
    <text evidence="1">Binds 1 Mg(2+) ion per subunit. May bind a second metal ion at a regulatory site, or after substrate binding.</text>
</comment>
<comment type="subunit">
    <text evidence="1">Monomer.</text>
</comment>
<comment type="subcellular location">
    <subcellularLocation>
        <location evidence="1">Cytoplasm</location>
    </subcellularLocation>
</comment>
<comment type="similarity">
    <text evidence="1">Belongs to the RNase H family.</text>
</comment>
<accession>A3D440</accession>
<keyword id="KW-0963">Cytoplasm</keyword>
<keyword id="KW-0255">Endonuclease</keyword>
<keyword id="KW-0378">Hydrolase</keyword>
<keyword id="KW-0460">Magnesium</keyword>
<keyword id="KW-0479">Metal-binding</keyword>
<keyword id="KW-0540">Nuclease</keyword>
<keyword id="KW-1185">Reference proteome</keyword>
<name>RNH_SHEB5</name>
<gene>
    <name evidence="1" type="primary">rnhA</name>
    <name type="ordered locus">Sbal_1999</name>
</gene>
<protein>
    <recommendedName>
        <fullName evidence="1">Ribonuclease H</fullName>
        <shortName evidence="1">RNase H</shortName>
        <ecNumber evidence="1">3.1.26.4</ecNumber>
    </recommendedName>
</protein>
<organism>
    <name type="scientific">Shewanella baltica (strain OS155 / ATCC BAA-1091)</name>
    <dbReference type="NCBI Taxonomy" id="325240"/>
    <lineage>
        <taxon>Bacteria</taxon>
        <taxon>Pseudomonadati</taxon>
        <taxon>Pseudomonadota</taxon>
        <taxon>Gammaproteobacteria</taxon>
        <taxon>Alteromonadales</taxon>
        <taxon>Shewanellaceae</taxon>
        <taxon>Shewanella</taxon>
    </lineage>
</organism>
<feature type="chain" id="PRO_1000074666" description="Ribonuclease H">
    <location>
        <begin position="1"/>
        <end position="156"/>
    </location>
</feature>
<feature type="domain" description="RNase H type-1" evidence="2">
    <location>
        <begin position="3"/>
        <end position="144"/>
    </location>
</feature>
<feature type="binding site" evidence="1">
    <location>
        <position position="12"/>
    </location>
    <ligand>
        <name>Mg(2+)</name>
        <dbReference type="ChEBI" id="CHEBI:18420"/>
        <label>1</label>
    </ligand>
</feature>
<feature type="binding site" evidence="1">
    <location>
        <position position="12"/>
    </location>
    <ligand>
        <name>Mg(2+)</name>
        <dbReference type="ChEBI" id="CHEBI:18420"/>
        <label>2</label>
    </ligand>
</feature>
<feature type="binding site" evidence="1">
    <location>
        <position position="50"/>
    </location>
    <ligand>
        <name>Mg(2+)</name>
        <dbReference type="ChEBI" id="CHEBI:18420"/>
        <label>1</label>
    </ligand>
</feature>
<feature type="binding site" evidence="1">
    <location>
        <position position="72"/>
    </location>
    <ligand>
        <name>Mg(2+)</name>
        <dbReference type="ChEBI" id="CHEBI:18420"/>
        <label>1</label>
    </ligand>
</feature>
<feature type="binding site" evidence="1">
    <location>
        <position position="136"/>
    </location>
    <ligand>
        <name>Mg(2+)</name>
        <dbReference type="ChEBI" id="CHEBI:18420"/>
        <label>2</label>
    </ligand>
</feature>
<evidence type="ECO:0000255" key="1">
    <source>
        <dbReference type="HAMAP-Rule" id="MF_00042"/>
    </source>
</evidence>
<evidence type="ECO:0000255" key="2">
    <source>
        <dbReference type="PROSITE-ProRule" id="PRU00408"/>
    </source>
</evidence>
<proteinExistence type="inferred from homology"/>
<dbReference type="EC" id="3.1.26.4" evidence="1"/>
<dbReference type="EMBL" id="CP000563">
    <property type="protein sequence ID" value="ABN61503.1"/>
    <property type="molecule type" value="Genomic_DNA"/>
</dbReference>
<dbReference type="RefSeq" id="WP_006081489.1">
    <property type="nucleotide sequence ID" value="NC_009052.1"/>
</dbReference>
<dbReference type="SMR" id="A3D440"/>
<dbReference type="STRING" id="325240.Sbal_1999"/>
<dbReference type="GeneID" id="11772215"/>
<dbReference type="KEGG" id="sbl:Sbal_1999"/>
<dbReference type="HOGENOM" id="CLU_030894_6_0_6"/>
<dbReference type="OrthoDB" id="7845843at2"/>
<dbReference type="Proteomes" id="UP000001557">
    <property type="component" value="Chromosome"/>
</dbReference>
<dbReference type="GO" id="GO:0005737">
    <property type="term" value="C:cytoplasm"/>
    <property type="evidence" value="ECO:0007669"/>
    <property type="project" value="UniProtKB-SubCell"/>
</dbReference>
<dbReference type="GO" id="GO:0000287">
    <property type="term" value="F:magnesium ion binding"/>
    <property type="evidence" value="ECO:0007669"/>
    <property type="project" value="UniProtKB-UniRule"/>
</dbReference>
<dbReference type="GO" id="GO:0003676">
    <property type="term" value="F:nucleic acid binding"/>
    <property type="evidence" value="ECO:0007669"/>
    <property type="project" value="InterPro"/>
</dbReference>
<dbReference type="GO" id="GO:0004523">
    <property type="term" value="F:RNA-DNA hybrid ribonuclease activity"/>
    <property type="evidence" value="ECO:0007669"/>
    <property type="project" value="UniProtKB-UniRule"/>
</dbReference>
<dbReference type="GO" id="GO:0043137">
    <property type="term" value="P:DNA replication, removal of RNA primer"/>
    <property type="evidence" value="ECO:0007669"/>
    <property type="project" value="TreeGrafter"/>
</dbReference>
<dbReference type="CDD" id="cd09278">
    <property type="entry name" value="RNase_HI_prokaryote_like"/>
    <property type="match status" value="1"/>
</dbReference>
<dbReference type="FunFam" id="3.30.420.10:FF:000008">
    <property type="entry name" value="Ribonuclease H"/>
    <property type="match status" value="1"/>
</dbReference>
<dbReference type="Gene3D" id="3.30.420.10">
    <property type="entry name" value="Ribonuclease H-like superfamily/Ribonuclease H"/>
    <property type="match status" value="1"/>
</dbReference>
<dbReference type="HAMAP" id="MF_00042">
    <property type="entry name" value="RNase_H"/>
    <property type="match status" value="1"/>
</dbReference>
<dbReference type="InterPro" id="IPR050092">
    <property type="entry name" value="RNase_H"/>
</dbReference>
<dbReference type="InterPro" id="IPR012337">
    <property type="entry name" value="RNaseH-like_sf"/>
</dbReference>
<dbReference type="InterPro" id="IPR002156">
    <property type="entry name" value="RNaseH_domain"/>
</dbReference>
<dbReference type="InterPro" id="IPR036397">
    <property type="entry name" value="RNaseH_sf"/>
</dbReference>
<dbReference type="InterPro" id="IPR022892">
    <property type="entry name" value="RNaseHI"/>
</dbReference>
<dbReference type="NCBIfam" id="NF001236">
    <property type="entry name" value="PRK00203.1"/>
    <property type="match status" value="1"/>
</dbReference>
<dbReference type="PANTHER" id="PTHR10642">
    <property type="entry name" value="RIBONUCLEASE H1"/>
    <property type="match status" value="1"/>
</dbReference>
<dbReference type="PANTHER" id="PTHR10642:SF26">
    <property type="entry name" value="RIBONUCLEASE H1"/>
    <property type="match status" value="1"/>
</dbReference>
<dbReference type="Pfam" id="PF00075">
    <property type="entry name" value="RNase_H"/>
    <property type="match status" value="1"/>
</dbReference>
<dbReference type="SUPFAM" id="SSF53098">
    <property type="entry name" value="Ribonuclease H-like"/>
    <property type="match status" value="1"/>
</dbReference>
<dbReference type="PROSITE" id="PS50879">
    <property type="entry name" value="RNASE_H_1"/>
    <property type="match status" value="1"/>
</dbReference>
<sequence length="156" mass="17584">MTELKLIHIFTDGSCLGNPGPGGYGIVMNYKGHTKEMSDGFALTTNNRMELLAPIIALESLKEPCQVVLTSDSQYMRQGIMTWIHGWKKKGWMTSNRTPVKNVDLWKRLDKASQMHTIDWQWVKGHAGHAENERCDVLARTAAESKPTQPDLGYQP</sequence>
<reference key="1">
    <citation type="submission" date="2007-02" db="EMBL/GenBank/DDBJ databases">
        <title>Complete sequence of chromosome of Shewanella baltica OS155.</title>
        <authorList>
            <consortium name="US DOE Joint Genome Institute"/>
            <person name="Copeland A."/>
            <person name="Lucas S."/>
            <person name="Lapidus A."/>
            <person name="Barry K."/>
            <person name="Detter J.C."/>
            <person name="Glavina del Rio T."/>
            <person name="Hammon N."/>
            <person name="Israni S."/>
            <person name="Dalin E."/>
            <person name="Tice H."/>
            <person name="Pitluck S."/>
            <person name="Sims D.R."/>
            <person name="Brettin T."/>
            <person name="Bruce D."/>
            <person name="Han C."/>
            <person name="Tapia R."/>
            <person name="Brainard J."/>
            <person name="Schmutz J."/>
            <person name="Larimer F."/>
            <person name="Land M."/>
            <person name="Hauser L."/>
            <person name="Kyrpides N."/>
            <person name="Mikhailova N."/>
            <person name="Brettar I."/>
            <person name="Klappenbach J."/>
            <person name="Konstantinidis K."/>
            <person name="Rodrigues J."/>
            <person name="Tiedje J."/>
            <person name="Richardson P."/>
        </authorList>
    </citation>
    <scope>NUCLEOTIDE SEQUENCE [LARGE SCALE GENOMIC DNA]</scope>
    <source>
        <strain>OS155 / ATCC BAA-1091</strain>
    </source>
</reference>